<comment type="catalytic activity">
    <reaction evidence="1">
        <text>D-ribulose + ATP = D-ribulose 5-phosphate + ADP + H(+)</text>
        <dbReference type="Rhea" id="RHEA:17601"/>
        <dbReference type="ChEBI" id="CHEBI:15378"/>
        <dbReference type="ChEBI" id="CHEBI:17173"/>
        <dbReference type="ChEBI" id="CHEBI:30616"/>
        <dbReference type="ChEBI" id="CHEBI:58121"/>
        <dbReference type="ChEBI" id="CHEBI:456216"/>
        <dbReference type="EC" id="2.7.1.16"/>
    </reaction>
</comment>
<comment type="catalytic activity">
    <reaction evidence="1">
        <text>L-ribulose + ATP = L-ribulose 5-phosphate + ADP + H(+)</text>
        <dbReference type="Rhea" id="RHEA:22072"/>
        <dbReference type="ChEBI" id="CHEBI:15378"/>
        <dbReference type="ChEBI" id="CHEBI:16880"/>
        <dbReference type="ChEBI" id="CHEBI:30616"/>
        <dbReference type="ChEBI" id="CHEBI:58226"/>
        <dbReference type="ChEBI" id="CHEBI:456216"/>
        <dbReference type="EC" id="2.7.1.16"/>
    </reaction>
</comment>
<comment type="pathway">
    <text evidence="1">Carbohydrate degradation; L-arabinose degradation via L-ribulose; D-xylulose 5-phosphate from L-arabinose (bacterial route): step 2/3.</text>
</comment>
<comment type="similarity">
    <text evidence="1">Belongs to the ribulokinase family.</text>
</comment>
<feature type="chain" id="PRO_0000198354" description="Ribulokinase">
    <location>
        <begin position="1"/>
        <end position="563"/>
    </location>
</feature>
<feature type="strand" evidence="2">
    <location>
        <begin position="5"/>
        <end position="11"/>
    </location>
</feature>
<feature type="strand" evidence="2">
    <location>
        <begin position="13"/>
        <end position="22"/>
    </location>
</feature>
<feature type="turn" evidence="2">
    <location>
        <begin position="23"/>
        <end position="25"/>
    </location>
</feature>
<feature type="strand" evidence="2">
    <location>
        <begin position="28"/>
        <end position="35"/>
    </location>
</feature>
<feature type="strand" evidence="2">
    <location>
        <begin position="41"/>
        <end position="45"/>
    </location>
</feature>
<feature type="helix" evidence="2">
    <location>
        <begin position="61"/>
        <end position="77"/>
    </location>
</feature>
<feature type="strand" evidence="2">
    <location>
        <begin position="86"/>
        <end position="93"/>
    </location>
</feature>
<feature type="strand" evidence="2">
    <location>
        <begin position="98"/>
        <end position="101"/>
    </location>
</feature>
<feature type="helix" evidence="2">
    <location>
        <begin position="108"/>
        <end position="110"/>
    </location>
</feature>
<feature type="helix" evidence="2">
    <location>
        <begin position="114"/>
        <end position="116"/>
    </location>
</feature>
<feature type="helix" evidence="2">
    <location>
        <begin position="118"/>
        <end position="120"/>
    </location>
</feature>
<feature type="strand" evidence="2">
    <location>
        <begin position="121"/>
        <end position="123"/>
    </location>
</feature>
<feature type="helix" evidence="2">
    <location>
        <begin position="131"/>
        <end position="144"/>
    </location>
</feature>
<feature type="helix" evidence="2">
    <location>
        <begin position="149"/>
        <end position="152"/>
    </location>
</feature>
<feature type="helix" evidence="2">
    <location>
        <begin position="161"/>
        <end position="171"/>
    </location>
</feature>
<feature type="helix" evidence="2">
    <location>
        <begin position="173"/>
        <end position="178"/>
    </location>
</feature>
<feature type="strand" evidence="2">
    <location>
        <begin position="180"/>
        <end position="184"/>
    </location>
</feature>
<feature type="helix" evidence="2">
    <location>
        <begin position="185"/>
        <end position="194"/>
    </location>
</feature>
<feature type="helix" evidence="2">
    <location>
        <begin position="201"/>
        <end position="207"/>
    </location>
</feature>
<feature type="turn" evidence="2">
    <location>
        <begin position="212"/>
        <end position="214"/>
    </location>
</feature>
<feature type="helix" evidence="2">
    <location>
        <begin position="219"/>
        <end position="223"/>
    </location>
</feature>
<feature type="helix" evidence="2">
    <location>
        <begin position="227"/>
        <end position="229"/>
    </location>
</feature>
<feature type="helix" evidence="2">
    <location>
        <begin position="232"/>
        <end position="234"/>
    </location>
</feature>
<feature type="turn" evidence="2">
    <location>
        <begin position="235"/>
        <end position="237"/>
    </location>
</feature>
<feature type="strand" evidence="2">
    <location>
        <begin position="246"/>
        <end position="250"/>
    </location>
</feature>
<feature type="helix" evidence="2">
    <location>
        <begin position="253"/>
        <end position="259"/>
    </location>
</feature>
<feature type="strand" evidence="2">
    <location>
        <begin position="266"/>
        <end position="268"/>
    </location>
</feature>
<feature type="turn" evidence="2">
    <location>
        <begin position="273"/>
        <end position="276"/>
    </location>
</feature>
<feature type="helix" evidence="2">
    <location>
        <begin position="277"/>
        <end position="280"/>
    </location>
</feature>
<feature type="strand" evidence="2">
    <location>
        <begin position="287"/>
        <end position="305"/>
    </location>
</feature>
<feature type="strand" evidence="2">
    <location>
        <begin position="313"/>
        <end position="317"/>
    </location>
</feature>
<feature type="strand" evidence="2">
    <location>
        <begin position="319"/>
        <end position="321"/>
    </location>
</feature>
<feature type="strand" evidence="2">
    <location>
        <begin position="324"/>
        <end position="332"/>
    </location>
</feature>
<feature type="helix" evidence="2">
    <location>
        <begin position="335"/>
        <end position="344"/>
    </location>
</feature>
<feature type="helix" evidence="2">
    <location>
        <begin position="348"/>
        <end position="356"/>
    </location>
</feature>
<feature type="helix" evidence="2">
    <location>
        <begin position="361"/>
        <end position="369"/>
    </location>
</feature>
<feature type="strand" evidence="2">
    <location>
        <begin position="380"/>
        <end position="382"/>
    </location>
</feature>
<feature type="turn" evidence="2">
    <location>
        <begin position="390"/>
        <end position="392"/>
    </location>
</feature>
<feature type="strand" evidence="2">
    <location>
        <begin position="394"/>
        <end position="396"/>
    </location>
</feature>
<feature type="strand" evidence="2">
    <location>
        <begin position="399"/>
        <end position="404"/>
    </location>
</feature>
<feature type="helix" evidence="2">
    <location>
        <begin position="410"/>
        <end position="433"/>
    </location>
</feature>
<feature type="turn" evidence="2">
    <location>
        <begin position="434"/>
        <end position="436"/>
    </location>
</feature>
<feature type="strand" evidence="2">
    <location>
        <begin position="439"/>
        <end position="447"/>
    </location>
</feature>
<feature type="helix" evidence="2">
    <location>
        <begin position="448"/>
        <end position="451"/>
    </location>
</feature>
<feature type="helix" evidence="2">
    <location>
        <begin position="453"/>
        <end position="463"/>
    </location>
</feature>
<feature type="strand" evidence="2">
    <location>
        <begin position="467"/>
        <end position="470"/>
    </location>
</feature>
<feature type="helix" evidence="2">
    <location>
        <begin position="475"/>
        <end position="488"/>
    </location>
</feature>
<feature type="turn" evidence="2">
    <location>
        <begin position="490"/>
        <end position="493"/>
    </location>
</feature>
<feature type="helix" evidence="2">
    <location>
        <begin position="498"/>
        <end position="505"/>
    </location>
</feature>
<feature type="helix" evidence="2">
    <location>
        <begin position="517"/>
        <end position="538"/>
    </location>
</feature>
<feature type="strand" evidence="2">
    <location>
        <begin position="539"/>
        <end position="541"/>
    </location>
</feature>
<feature type="helix" evidence="2">
    <location>
        <begin position="544"/>
        <end position="551"/>
    </location>
</feature>
<organism>
    <name type="scientific">Halalkalibacterium halodurans (strain ATCC BAA-125 / DSM 18197 / FERM 7344 / JCM 9153 / C-125)</name>
    <name type="common">Bacillus halodurans</name>
    <dbReference type="NCBI Taxonomy" id="272558"/>
    <lineage>
        <taxon>Bacteria</taxon>
        <taxon>Bacillati</taxon>
        <taxon>Bacillota</taxon>
        <taxon>Bacilli</taxon>
        <taxon>Bacillales</taxon>
        <taxon>Bacillaceae</taxon>
        <taxon>Halalkalibacterium (ex Joshi et al. 2022)</taxon>
    </lineage>
</organism>
<proteinExistence type="evidence at protein level"/>
<protein>
    <recommendedName>
        <fullName evidence="1">Ribulokinase</fullName>
        <ecNumber evidence="1">2.7.1.16</ecNumber>
    </recommendedName>
</protein>
<name>ARAB_HALH5</name>
<keyword id="KW-0002">3D-structure</keyword>
<keyword id="KW-0054">Arabinose catabolism</keyword>
<keyword id="KW-0067">ATP-binding</keyword>
<keyword id="KW-0119">Carbohydrate metabolism</keyword>
<keyword id="KW-0418">Kinase</keyword>
<keyword id="KW-0547">Nucleotide-binding</keyword>
<keyword id="KW-1185">Reference proteome</keyword>
<keyword id="KW-0808">Transferase</keyword>
<evidence type="ECO:0000255" key="1">
    <source>
        <dbReference type="HAMAP-Rule" id="MF_00520"/>
    </source>
</evidence>
<evidence type="ECO:0007829" key="2">
    <source>
        <dbReference type="PDB" id="3QDK"/>
    </source>
</evidence>
<reference key="1">
    <citation type="journal article" date="2000" name="Nucleic Acids Res.">
        <title>Complete genome sequence of the alkaliphilic bacterium Bacillus halodurans and genomic sequence comparison with Bacillus subtilis.</title>
        <authorList>
            <person name="Takami H."/>
            <person name="Nakasone K."/>
            <person name="Takaki Y."/>
            <person name="Maeno G."/>
            <person name="Sasaki R."/>
            <person name="Masui N."/>
            <person name="Fuji F."/>
            <person name="Hirama C."/>
            <person name="Nakamura Y."/>
            <person name="Ogasawara N."/>
            <person name="Kuhara S."/>
            <person name="Horikoshi K."/>
        </authorList>
    </citation>
    <scope>NUCLEOTIDE SEQUENCE [LARGE SCALE GENOMIC DNA]</scope>
    <source>
        <strain>ATCC BAA-125 / DSM 18197 / FERM 7344 / JCM 9153 / C-125</strain>
    </source>
</reference>
<dbReference type="EC" id="2.7.1.16" evidence="1"/>
<dbReference type="EMBL" id="BA000004">
    <property type="protein sequence ID" value="BAB05591.1"/>
    <property type="molecule type" value="Genomic_DNA"/>
</dbReference>
<dbReference type="PIR" id="H83883">
    <property type="entry name" value="H83883"/>
</dbReference>
<dbReference type="RefSeq" id="WP_010898033.1">
    <property type="nucleotide sequence ID" value="NC_002570.2"/>
</dbReference>
<dbReference type="PDB" id="3QDK">
    <property type="method" value="X-ray"/>
    <property type="resolution" value="2.31 A"/>
    <property type="chains" value="A/B/C/D=3-563"/>
</dbReference>
<dbReference type="PDBsum" id="3QDK"/>
<dbReference type="SMR" id="Q9KBQ3"/>
<dbReference type="STRING" id="272558.gene:10727770"/>
<dbReference type="KEGG" id="bha:BH1872"/>
<dbReference type="eggNOG" id="COG1069">
    <property type="taxonomic scope" value="Bacteria"/>
</dbReference>
<dbReference type="HOGENOM" id="CLU_009281_9_1_9"/>
<dbReference type="OrthoDB" id="9805576at2"/>
<dbReference type="BRENDA" id="2.7.1.16">
    <property type="organism ID" value="661"/>
</dbReference>
<dbReference type="UniPathway" id="UPA00145">
    <property type="reaction ID" value="UER00566"/>
</dbReference>
<dbReference type="EvolutionaryTrace" id="Q9KBQ3"/>
<dbReference type="Proteomes" id="UP000001258">
    <property type="component" value="Chromosome"/>
</dbReference>
<dbReference type="GO" id="GO:0005737">
    <property type="term" value="C:cytoplasm"/>
    <property type="evidence" value="ECO:0007669"/>
    <property type="project" value="TreeGrafter"/>
</dbReference>
<dbReference type="GO" id="GO:0005524">
    <property type="term" value="F:ATP binding"/>
    <property type="evidence" value="ECO:0007669"/>
    <property type="project" value="UniProtKB-KW"/>
</dbReference>
<dbReference type="GO" id="GO:0019150">
    <property type="term" value="F:D-ribulokinase activity"/>
    <property type="evidence" value="ECO:0007669"/>
    <property type="project" value="RHEA"/>
</dbReference>
<dbReference type="GO" id="GO:0008741">
    <property type="term" value="F:ribulokinase activity"/>
    <property type="evidence" value="ECO:0007669"/>
    <property type="project" value="UniProtKB-UniRule"/>
</dbReference>
<dbReference type="GO" id="GO:0019569">
    <property type="term" value="P:L-arabinose catabolic process to xylulose 5-phosphate"/>
    <property type="evidence" value="ECO:0007669"/>
    <property type="project" value="UniProtKB-UniRule"/>
</dbReference>
<dbReference type="CDD" id="cd07768">
    <property type="entry name" value="ASKHA_NBD_FGGY_RBK-like"/>
    <property type="match status" value="1"/>
</dbReference>
<dbReference type="Gene3D" id="3.30.420.40">
    <property type="match status" value="2"/>
</dbReference>
<dbReference type="HAMAP" id="MF_00520">
    <property type="entry name" value="Ribulokinase"/>
    <property type="match status" value="1"/>
</dbReference>
<dbReference type="InterPro" id="IPR043129">
    <property type="entry name" value="ATPase_NBD"/>
</dbReference>
<dbReference type="InterPro" id="IPR000577">
    <property type="entry name" value="Carb_kinase_FGGY"/>
</dbReference>
<dbReference type="InterPro" id="IPR018485">
    <property type="entry name" value="FGGY_C"/>
</dbReference>
<dbReference type="InterPro" id="IPR018484">
    <property type="entry name" value="FGGY_N"/>
</dbReference>
<dbReference type="InterPro" id="IPR005929">
    <property type="entry name" value="Ribulokinase"/>
</dbReference>
<dbReference type="NCBIfam" id="TIGR01234">
    <property type="entry name" value="L-ribulokinase"/>
    <property type="match status" value="1"/>
</dbReference>
<dbReference type="NCBIfam" id="NF003154">
    <property type="entry name" value="PRK04123.1"/>
    <property type="match status" value="1"/>
</dbReference>
<dbReference type="PANTHER" id="PTHR43435:SF4">
    <property type="entry name" value="FGGY CARBOHYDRATE KINASE DOMAIN-CONTAINING PROTEIN"/>
    <property type="match status" value="1"/>
</dbReference>
<dbReference type="PANTHER" id="PTHR43435">
    <property type="entry name" value="RIBULOKINASE"/>
    <property type="match status" value="1"/>
</dbReference>
<dbReference type="Pfam" id="PF02782">
    <property type="entry name" value="FGGY_C"/>
    <property type="match status" value="1"/>
</dbReference>
<dbReference type="Pfam" id="PF00370">
    <property type="entry name" value="FGGY_N"/>
    <property type="match status" value="1"/>
</dbReference>
<dbReference type="PIRSF" id="PIRSF000538">
    <property type="entry name" value="GlpK"/>
    <property type="match status" value="1"/>
</dbReference>
<dbReference type="SUPFAM" id="SSF53067">
    <property type="entry name" value="Actin-like ATPase domain"/>
    <property type="match status" value="2"/>
</dbReference>
<accession>Q9KBQ3</accession>
<gene>
    <name evidence="1" type="primary">araB</name>
    <name type="ordered locus">BH1872</name>
</gene>
<sequence>MTTKYTIGVDYGTESGRAVLIDLSNGQELADHVTPYRHGVIDQYLPNTNIKLGHEWALQHPLDYVEVLTTSVPAVMKESGVDADDVIGIGVDFTACTMLPVDEEGQPLCLLAQYKDNPHSWVKLWKHHAAQDKANAINEMAEKRGEAFLPRYGGKISSEWMIAKVWQILDEAEDVYNRTDQFLEATDWIVSQMTGKIVKNSCTAGYKAIWHKREGYPSNEFFKALDPRLEHLTTTKLRGDIVPLGERAGGLLPEMAEKMGLNPGIAVAVGNVDAHAAVPAVGVTTPGKLVMAMGTSICHMLLGEKEQEVEGMCGVVEDGIIPGYLGYEAGQSAVGDIFAWFVKHGVSAATFDEAQEKGVNVHALLEEKASQLRPGESGLLALDWWNGNRSILVDTELSGMLLGYTLQTKPEEIYRALLEATAFGTRAIVDAFHGRGVEVHELYACGGLPQKNHLLMQIFADVTNREIKVAASKQTPALGAAMFASVAAGSEVGGYDSIEEAAKKMGRVKDETFKPIPEHVAIYEKLYQEYVTLHDYFGRGANDVMKRLKALKSIQHRPSSLLT</sequence>